<evidence type="ECO:0000255" key="1">
    <source>
        <dbReference type="HAMAP-Rule" id="MF_00373"/>
    </source>
</evidence>
<evidence type="ECO:0000305" key="2"/>
<reference key="1">
    <citation type="journal article" date="2004" name="Nucleic Acids Res.">
        <title>Genome sequence of Symbiobacterium thermophilum, an uncultivable bacterium that depends on microbial commensalism.</title>
        <authorList>
            <person name="Ueda K."/>
            <person name="Yamashita A."/>
            <person name="Ishikawa J."/>
            <person name="Shimada M."/>
            <person name="Watsuji T."/>
            <person name="Morimura K."/>
            <person name="Ikeda H."/>
            <person name="Hattori M."/>
            <person name="Beppu T."/>
        </authorList>
    </citation>
    <scope>NUCLEOTIDE SEQUENCE [LARGE SCALE GENOMIC DNA]</scope>
    <source>
        <strain>DSM 24528 / JCM 14929 / IAM 14863 / T</strain>
    </source>
</reference>
<proteinExistence type="inferred from homology"/>
<name>RL28_SYMTH</name>
<keyword id="KW-1185">Reference proteome</keyword>
<keyword id="KW-0687">Ribonucleoprotein</keyword>
<keyword id="KW-0689">Ribosomal protein</keyword>
<organism>
    <name type="scientific">Symbiobacterium thermophilum (strain DSM 24528 / JCM 14929 / IAM 14863 / T)</name>
    <dbReference type="NCBI Taxonomy" id="292459"/>
    <lineage>
        <taxon>Bacteria</taxon>
        <taxon>Bacillati</taxon>
        <taxon>Bacillota</taxon>
        <taxon>Clostridia</taxon>
        <taxon>Eubacteriales</taxon>
        <taxon>Symbiobacteriaceae</taxon>
        <taxon>Symbiobacterium</taxon>
    </lineage>
</organism>
<sequence length="63" mass="7086">MARRCEVCNKGVSHGHNVSHAENKTKRTWSPNVQTVRAVVDGRVKRITVCTRCLRSGKVQRAI</sequence>
<gene>
    <name evidence="1" type="primary">rpmB</name>
    <name type="ordered locus">STH1359</name>
</gene>
<feature type="chain" id="PRO_0000178571" description="Large ribosomal subunit protein bL28">
    <location>
        <begin position="1"/>
        <end position="63"/>
    </location>
</feature>
<accession>Q67PP9</accession>
<comment type="similarity">
    <text evidence="1">Belongs to the bacterial ribosomal protein bL28 family.</text>
</comment>
<protein>
    <recommendedName>
        <fullName evidence="1">Large ribosomal subunit protein bL28</fullName>
    </recommendedName>
    <alternativeName>
        <fullName evidence="2">50S ribosomal protein L28</fullName>
    </alternativeName>
</protein>
<dbReference type="EMBL" id="AP006840">
    <property type="protein sequence ID" value="BAD40344.1"/>
    <property type="molecule type" value="Genomic_DNA"/>
</dbReference>
<dbReference type="RefSeq" id="WP_011195489.1">
    <property type="nucleotide sequence ID" value="NC_006177.1"/>
</dbReference>
<dbReference type="SMR" id="Q67PP9"/>
<dbReference type="STRING" id="292459.STH1359"/>
<dbReference type="KEGG" id="sth:STH1359"/>
<dbReference type="eggNOG" id="COG0227">
    <property type="taxonomic scope" value="Bacteria"/>
</dbReference>
<dbReference type="HOGENOM" id="CLU_064548_7_0_9"/>
<dbReference type="OrthoDB" id="9805609at2"/>
<dbReference type="Proteomes" id="UP000000417">
    <property type="component" value="Chromosome"/>
</dbReference>
<dbReference type="GO" id="GO:1990904">
    <property type="term" value="C:ribonucleoprotein complex"/>
    <property type="evidence" value="ECO:0007669"/>
    <property type="project" value="UniProtKB-KW"/>
</dbReference>
<dbReference type="GO" id="GO:0005840">
    <property type="term" value="C:ribosome"/>
    <property type="evidence" value="ECO:0007669"/>
    <property type="project" value="UniProtKB-KW"/>
</dbReference>
<dbReference type="GO" id="GO:0003735">
    <property type="term" value="F:structural constituent of ribosome"/>
    <property type="evidence" value="ECO:0007669"/>
    <property type="project" value="InterPro"/>
</dbReference>
<dbReference type="GO" id="GO:0006412">
    <property type="term" value="P:translation"/>
    <property type="evidence" value="ECO:0007669"/>
    <property type="project" value="UniProtKB-UniRule"/>
</dbReference>
<dbReference type="Gene3D" id="2.30.170.40">
    <property type="entry name" value="Ribosomal protein L28/L24"/>
    <property type="match status" value="1"/>
</dbReference>
<dbReference type="HAMAP" id="MF_00373">
    <property type="entry name" value="Ribosomal_bL28"/>
    <property type="match status" value="1"/>
</dbReference>
<dbReference type="InterPro" id="IPR050096">
    <property type="entry name" value="Bacterial_rp_bL28"/>
</dbReference>
<dbReference type="InterPro" id="IPR026569">
    <property type="entry name" value="Ribosomal_bL28"/>
</dbReference>
<dbReference type="InterPro" id="IPR034704">
    <property type="entry name" value="Ribosomal_bL28/bL31-like_sf"/>
</dbReference>
<dbReference type="InterPro" id="IPR001383">
    <property type="entry name" value="Ribosomal_bL28_bact-type"/>
</dbReference>
<dbReference type="InterPro" id="IPR037147">
    <property type="entry name" value="Ribosomal_bL28_sf"/>
</dbReference>
<dbReference type="NCBIfam" id="TIGR00009">
    <property type="entry name" value="L28"/>
    <property type="match status" value="1"/>
</dbReference>
<dbReference type="PANTHER" id="PTHR39080">
    <property type="entry name" value="50S RIBOSOMAL PROTEIN L28"/>
    <property type="match status" value="1"/>
</dbReference>
<dbReference type="PANTHER" id="PTHR39080:SF1">
    <property type="entry name" value="LARGE RIBOSOMAL SUBUNIT PROTEIN BL28A"/>
    <property type="match status" value="1"/>
</dbReference>
<dbReference type="Pfam" id="PF00830">
    <property type="entry name" value="Ribosomal_L28"/>
    <property type="match status" value="1"/>
</dbReference>
<dbReference type="SUPFAM" id="SSF143800">
    <property type="entry name" value="L28p-like"/>
    <property type="match status" value="1"/>
</dbReference>